<reference key="1">
    <citation type="submission" date="2007-03" db="EMBL/GenBank/DDBJ databases">
        <title>Complete sequence of Shewanella loihica PV-4.</title>
        <authorList>
            <consortium name="US DOE Joint Genome Institute"/>
            <person name="Copeland A."/>
            <person name="Lucas S."/>
            <person name="Lapidus A."/>
            <person name="Barry K."/>
            <person name="Detter J.C."/>
            <person name="Glavina del Rio T."/>
            <person name="Hammon N."/>
            <person name="Israni S."/>
            <person name="Dalin E."/>
            <person name="Tice H."/>
            <person name="Pitluck S."/>
            <person name="Chain P."/>
            <person name="Malfatti S."/>
            <person name="Shin M."/>
            <person name="Vergez L."/>
            <person name="Schmutz J."/>
            <person name="Larimer F."/>
            <person name="Land M."/>
            <person name="Hauser L."/>
            <person name="Kyrpides N."/>
            <person name="Mikhailova N."/>
            <person name="Romine M.F."/>
            <person name="Serres G."/>
            <person name="Fredrickson J."/>
            <person name="Tiedje J."/>
            <person name="Richardson P."/>
        </authorList>
    </citation>
    <scope>NUCLEOTIDE SEQUENCE [LARGE SCALE GENOMIC DNA]</scope>
    <source>
        <strain>ATCC BAA-1088 / PV-4</strain>
    </source>
</reference>
<proteinExistence type="inferred from homology"/>
<comment type="function">
    <text evidence="1">Catalyzes the conversion of S-adenosyl-L-methionine (SAM) to carboxy-S-adenosyl-L-methionine (Cx-SAM).</text>
</comment>
<comment type="catalytic activity">
    <reaction evidence="1">
        <text>prephenate + S-adenosyl-L-methionine = carboxy-S-adenosyl-L-methionine + 3-phenylpyruvate + H2O</text>
        <dbReference type="Rhea" id="RHEA:51692"/>
        <dbReference type="ChEBI" id="CHEBI:15377"/>
        <dbReference type="ChEBI" id="CHEBI:18005"/>
        <dbReference type="ChEBI" id="CHEBI:29934"/>
        <dbReference type="ChEBI" id="CHEBI:59789"/>
        <dbReference type="ChEBI" id="CHEBI:134278"/>
    </reaction>
</comment>
<comment type="subunit">
    <text evidence="1">Homodimer.</text>
</comment>
<comment type="similarity">
    <text evidence="1">Belongs to the class I-like SAM-binding methyltransferase superfamily. Cx-SAM synthase family.</text>
</comment>
<sequence>MNSTQDTIYAQACEHISDFQFDDRVAGVFSDMIRRSVPGYGQIINTLGDFADKCVTPNSKIYDLGCSLGAATLSVRRRIEGRGCEIIAVDNSESMIERCKQNLSAYVSETPVDLICADIRDIEIQDASMVILNFTMQFLAPEDRQTLIAKIYQGLKPGGILVLSEKLVFEDEPVQHLLDELHLDFKRANGYSELEISQKRSSLEHVMKPDTLPQHQQRLKAQGFSHFSVWFQCFNFASMVAIK</sequence>
<protein>
    <recommendedName>
        <fullName evidence="1">Carboxy-S-adenosyl-L-methionine synthase</fullName>
        <shortName evidence="1">Cx-SAM synthase</shortName>
        <ecNumber evidence="1">2.1.3.-</ecNumber>
    </recommendedName>
</protein>
<feature type="chain" id="PRO_0000314380" description="Carboxy-S-adenosyl-L-methionine synthase">
    <location>
        <begin position="1"/>
        <end position="243"/>
    </location>
</feature>
<feature type="binding site" evidence="1">
    <location>
        <position position="40"/>
    </location>
    <ligand>
        <name>S-adenosyl-L-methionine</name>
        <dbReference type="ChEBI" id="CHEBI:59789"/>
    </ligand>
</feature>
<feature type="binding site" evidence="1">
    <location>
        <begin position="65"/>
        <end position="67"/>
    </location>
    <ligand>
        <name>S-adenosyl-L-methionine</name>
        <dbReference type="ChEBI" id="CHEBI:59789"/>
    </ligand>
</feature>
<feature type="binding site" evidence="1">
    <location>
        <begin position="90"/>
        <end position="91"/>
    </location>
    <ligand>
        <name>S-adenosyl-L-methionine</name>
        <dbReference type="ChEBI" id="CHEBI:59789"/>
    </ligand>
</feature>
<feature type="binding site" evidence="1">
    <location>
        <begin position="118"/>
        <end position="119"/>
    </location>
    <ligand>
        <name>S-adenosyl-L-methionine</name>
        <dbReference type="ChEBI" id="CHEBI:59789"/>
    </ligand>
</feature>
<feature type="binding site" evidence="1">
    <location>
        <position position="133"/>
    </location>
    <ligand>
        <name>S-adenosyl-L-methionine</name>
        <dbReference type="ChEBI" id="CHEBI:59789"/>
    </ligand>
</feature>
<feature type="binding site" evidence="1">
    <location>
        <position position="200"/>
    </location>
    <ligand>
        <name>S-adenosyl-L-methionine</name>
        <dbReference type="ChEBI" id="CHEBI:59789"/>
    </ligand>
</feature>
<accession>A3QEP9</accession>
<evidence type="ECO:0000255" key="1">
    <source>
        <dbReference type="HAMAP-Rule" id="MF_01589"/>
    </source>
</evidence>
<dbReference type="EC" id="2.1.3.-" evidence="1"/>
<dbReference type="EMBL" id="CP000606">
    <property type="protein sequence ID" value="ABO23947.1"/>
    <property type="molecule type" value="Genomic_DNA"/>
</dbReference>
<dbReference type="RefSeq" id="WP_011865879.1">
    <property type="nucleotide sequence ID" value="NC_009092.1"/>
</dbReference>
<dbReference type="SMR" id="A3QEP9"/>
<dbReference type="STRING" id="323850.Shew_2081"/>
<dbReference type="KEGG" id="slo:Shew_2081"/>
<dbReference type="eggNOG" id="COG2226">
    <property type="taxonomic scope" value="Bacteria"/>
</dbReference>
<dbReference type="HOGENOM" id="CLU_078475_0_0_6"/>
<dbReference type="OrthoDB" id="9779941at2"/>
<dbReference type="Proteomes" id="UP000001558">
    <property type="component" value="Chromosome"/>
</dbReference>
<dbReference type="GO" id="GO:0016743">
    <property type="term" value="F:carboxyl- or carbamoyltransferase activity"/>
    <property type="evidence" value="ECO:0007669"/>
    <property type="project" value="UniProtKB-UniRule"/>
</dbReference>
<dbReference type="GO" id="GO:1904047">
    <property type="term" value="F:S-adenosyl-L-methionine binding"/>
    <property type="evidence" value="ECO:0007669"/>
    <property type="project" value="UniProtKB-UniRule"/>
</dbReference>
<dbReference type="GO" id="GO:0002098">
    <property type="term" value="P:tRNA wobble uridine modification"/>
    <property type="evidence" value="ECO:0007669"/>
    <property type="project" value="InterPro"/>
</dbReference>
<dbReference type="CDD" id="cd02440">
    <property type="entry name" value="AdoMet_MTases"/>
    <property type="match status" value="1"/>
</dbReference>
<dbReference type="Gene3D" id="3.40.50.150">
    <property type="entry name" value="Vaccinia Virus protein VP39"/>
    <property type="match status" value="1"/>
</dbReference>
<dbReference type="HAMAP" id="MF_01589">
    <property type="entry name" value="Cx_SAM_synthase"/>
    <property type="match status" value="1"/>
</dbReference>
<dbReference type="InterPro" id="IPR005271">
    <property type="entry name" value="CmoA"/>
</dbReference>
<dbReference type="InterPro" id="IPR041698">
    <property type="entry name" value="Methyltransf_25"/>
</dbReference>
<dbReference type="InterPro" id="IPR029063">
    <property type="entry name" value="SAM-dependent_MTases_sf"/>
</dbReference>
<dbReference type="NCBIfam" id="TIGR00740">
    <property type="entry name" value="carboxy-S-adenosyl-L-methionine synthase CmoA"/>
    <property type="match status" value="1"/>
</dbReference>
<dbReference type="NCBIfam" id="NF011995">
    <property type="entry name" value="PRK15451.1"/>
    <property type="match status" value="1"/>
</dbReference>
<dbReference type="PANTHER" id="PTHR43861:SF2">
    <property type="entry name" value="CARBOXY-S-ADENOSYL-L-METHIONINE SYNTHASE"/>
    <property type="match status" value="1"/>
</dbReference>
<dbReference type="PANTHER" id="PTHR43861">
    <property type="entry name" value="TRANS-ACONITATE 2-METHYLTRANSFERASE-RELATED"/>
    <property type="match status" value="1"/>
</dbReference>
<dbReference type="Pfam" id="PF13649">
    <property type="entry name" value="Methyltransf_25"/>
    <property type="match status" value="1"/>
</dbReference>
<dbReference type="PIRSF" id="PIRSF006325">
    <property type="entry name" value="MeTrfase_bac"/>
    <property type="match status" value="1"/>
</dbReference>
<dbReference type="SUPFAM" id="SSF53335">
    <property type="entry name" value="S-adenosyl-L-methionine-dependent methyltransferases"/>
    <property type="match status" value="1"/>
</dbReference>
<organism>
    <name type="scientific">Shewanella loihica (strain ATCC BAA-1088 / PV-4)</name>
    <dbReference type="NCBI Taxonomy" id="323850"/>
    <lineage>
        <taxon>Bacteria</taxon>
        <taxon>Pseudomonadati</taxon>
        <taxon>Pseudomonadota</taxon>
        <taxon>Gammaproteobacteria</taxon>
        <taxon>Alteromonadales</taxon>
        <taxon>Shewanellaceae</taxon>
        <taxon>Shewanella</taxon>
    </lineage>
</organism>
<name>CMOA_SHELP</name>
<gene>
    <name evidence="1" type="primary">cmoA</name>
    <name type="ordered locus">Shew_2081</name>
</gene>
<keyword id="KW-1185">Reference proteome</keyword>
<keyword id="KW-0949">S-adenosyl-L-methionine</keyword>
<keyword id="KW-0808">Transferase</keyword>